<dbReference type="EMBL" id="AF042714">
    <property type="protein sequence ID" value="AAD02227.1"/>
    <property type="molecule type" value="mRNA"/>
</dbReference>
<dbReference type="EMBL" id="BC081805">
    <property type="protein sequence ID" value="AAH81805.1"/>
    <property type="molecule type" value="mRNA"/>
</dbReference>
<dbReference type="RefSeq" id="NP_067712.2">
    <property type="nucleotide sequence ID" value="NM_021680.2"/>
</dbReference>
<dbReference type="RefSeq" id="XP_017450561.1">
    <property type="nucleotide sequence ID" value="XM_017595072.1"/>
</dbReference>
<dbReference type="SMR" id="Q9Z2N4"/>
<dbReference type="FunCoup" id="Q9Z2N4">
    <property type="interactions" value="508"/>
</dbReference>
<dbReference type="STRING" id="10116.ENSRNOP00000050310"/>
<dbReference type="GlyCosmos" id="Q9Z2N4">
    <property type="glycosylation" value="4 sites, No reported glycans"/>
</dbReference>
<dbReference type="GlyGen" id="Q9Z2N4">
    <property type="glycosylation" value="4 sites"/>
</dbReference>
<dbReference type="iPTMnet" id="Q9Z2N4"/>
<dbReference type="PhosphoSitePlus" id="Q9Z2N4"/>
<dbReference type="PaxDb" id="10116-ENSRNOP00000050310"/>
<dbReference type="GeneID" id="59316"/>
<dbReference type="KEGG" id="rno:59316"/>
<dbReference type="UCSC" id="RGD:628723">
    <property type="organism name" value="rat"/>
</dbReference>
<dbReference type="AGR" id="RGD:628723"/>
<dbReference type="CTD" id="11247"/>
<dbReference type="RGD" id="628723">
    <property type="gene designation" value="Nxph4"/>
</dbReference>
<dbReference type="eggNOG" id="ENOG502QPNQ">
    <property type="taxonomic scope" value="Eukaryota"/>
</dbReference>
<dbReference type="InParanoid" id="Q9Z2N4"/>
<dbReference type="OrthoDB" id="9834165at2759"/>
<dbReference type="PhylomeDB" id="Q9Z2N4"/>
<dbReference type="TreeFam" id="TF333047"/>
<dbReference type="PRO" id="PR:Q9Z2N4"/>
<dbReference type="Proteomes" id="UP000002494">
    <property type="component" value="Unplaced"/>
</dbReference>
<dbReference type="GO" id="GO:0005576">
    <property type="term" value="C:extracellular region"/>
    <property type="evidence" value="ECO:0007669"/>
    <property type="project" value="UniProtKB-SubCell"/>
</dbReference>
<dbReference type="GO" id="GO:0098982">
    <property type="term" value="C:GABA-ergic synapse"/>
    <property type="evidence" value="ECO:0000266"/>
    <property type="project" value="RGD"/>
</dbReference>
<dbReference type="GO" id="GO:0045202">
    <property type="term" value="C:synapse"/>
    <property type="evidence" value="ECO:0000266"/>
    <property type="project" value="RGD"/>
</dbReference>
<dbReference type="GO" id="GO:0005102">
    <property type="term" value="F:signaling receptor binding"/>
    <property type="evidence" value="ECO:0000318"/>
    <property type="project" value="GO_Central"/>
</dbReference>
<dbReference type="GO" id="GO:0050804">
    <property type="term" value="P:modulation of chemical synaptic transmission"/>
    <property type="evidence" value="ECO:0000266"/>
    <property type="project" value="RGD"/>
</dbReference>
<dbReference type="InterPro" id="IPR010450">
    <property type="entry name" value="Nxph"/>
</dbReference>
<dbReference type="InterPro" id="IPR026845">
    <property type="entry name" value="NXPH/NXPE"/>
</dbReference>
<dbReference type="PANTHER" id="PTHR17103">
    <property type="entry name" value="NEUREXOPHILIN"/>
    <property type="match status" value="1"/>
</dbReference>
<dbReference type="PANTHER" id="PTHR17103:SF10">
    <property type="entry name" value="NEUREXOPHILIN-4"/>
    <property type="match status" value="1"/>
</dbReference>
<dbReference type="Pfam" id="PF06312">
    <property type="entry name" value="Neurexophilin"/>
    <property type="match status" value="2"/>
</dbReference>
<dbReference type="PIRSF" id="PIRSF038019">
    <property type="entry name" value="Neurexophilin"/>
    <property type="match status" value="1"/>
</dbReference>
<keyword id="KW-0325">Glycoprotein</keyword>
<keyword id="KW-1185">Reference proteome</keyword>
<keyword id="KW-0964">Secreted</keyword>
<keyword id="KW-0732">Signal</keyword>
<evidence type="ECO:0000250" key="1"/>
<evidence type="ECO:0000255" key="2"/>
<evidence type="ECO:0000305" key="3"/>
<name>NXPH4_RAT</name>
<sequence length="304" mass="32945">MRLLPEWLLLLFGPWLLRKVISGQIVESGRPQYLDLRPAMAGGGARGQQLPVPASSEGLNPVRSWSWAWPANHTGALARPGAAGGPPVPRTKRKPSIKAARAKKIFGWGDFYFRVHTLKFSLLVTGKIVDHVNGTFSVYFRHNSSSLGNLSVSIVPPSKRVEFGGVWLPGPAPHPLQSTLALEGVLPGLGPPLGMAGQGLGGNLGGALAGPLGGALGVPGAKESRAFNCHVEYEKTNRARKHRPCLYDPSQVCFTEHTQSQAAWLCAKPFKVICIFVSFLSFDYKLVQKVCPDYNFQSEHPYFG</sequence>
<reference key="1">
    <citation type="journal article" date="1998" name="J. Neurosci.">
        <title>Neurexophilins form a conserved family of neuropeptide-like glycoproteins.</title>
        <authorList>
            <person name="Missler M."/>
            <person name="Suedhof T.C."/>
        </authorList>
    </citation>
    <scope>NUCLEOTIDE SEQUENCE [MRNA]</scope>
    <source>
        <tissue>Brain</tissue>
    </source>
</reference>
<reference key="2">
    <citation type="journal article" date="2004" name="Genome Res.">
        <title>The status, quality, and expansion of the NIH full-length cDNA project: the Mammalian Gene Collection (MGC).</title>
        <authorList>
            <consortium name="The MGC Project Team"/>
        </authorList>
    </citation>
    <scope>NUCLEOTIDE SEQUENCE [LARGE SCALE MRNA]</scope>
    <source>
        <tissue>Kidney</tissue>
    </source>
</reference>
<organism>
    <name type="scientific">Rattus norvegicus</name>
    <name type="common">Rat</name>
    <dbReference type="NCBI Taxonomy" id="10116"/>
    <lineage>
        <taxon>Eukaryota</taxon>
        <taxon>Metazoa</taxon>
        <taxon>Chordata</taxon>
        <taxon>Craniata</taxon>
        <taxon>Vertebrata</taxon>
        <taxon>Euteleostomi</taxon>
        <taxon>Mammalia</taxon>
        <taxon>Eutheria</taxon>
        <taxon>Euarchontoglires</taxon>
        <taxon>Glires</taxon>
        <taxon>Rodentia</taxon>
        <taxon>Myomorpha</taxon>
        <taxon>Muroidea</taxon>
        <taxon>Muridae</taxon>
        <taxon>Murinae</taxon>
        <taxon>Rattus</taxon>
    </lineage>
</organism>
<comment type="function">
    <text evidence="3">May be signaling molecules that resemble neuropeptides and that act by binding to alpha-neurexins and possibly other receptors.</text>
</comment>
<comment type="subcellular location">
    <subcellularLocation>
        <location evidence="3">Secreted</location>
    </subcellularLocation>
</comment>
<comment type="tissue specificity">
    <text>Brain and kidney.</text>
</comment>
<comment type="PTM">
    <text evidence="1">May be proteolytically processed in neuron-like cells.</text>
</comment>
<comment type="similarity">
    <text evidence="3">Belongs to the neurexophilin family.</text>
</comment>
<gene>
    <name type="primary">Nxph4</name>
    <name type="synonym">Nph4</name>
</gene>
<feature type="signal peptide" evidence="2">
    <location>
        <begin position="1"/>
        <end position="23"/>
    </location>
</feature>
<feature type="chain" id="PRO_0000020069" description="Neurexophilin-4">
    <location>
        <begin position="24"/>
        <end position="304"/>
    </location>
</feature>
<feature type="region of interest" description="II">
    <location>
        <begin position="24"/>
        <end position="84"/>
    </location>
</feature>
<feature type="region of interest" description="III">
    <location>
        <begin position="85"/>
        <end position="163"/>
    </location>
</feature>
<feature type="region of interest" description="IV (linker domain)">
    <location>
        <begin position="164"/>
        <end position="220"/>
    </location>
</feature>
<feature type="region of interest" description="V (Cys-rich)">
    <location>
        <begin position="221"/>
        <end position="304"/>
    </location>
</feature>
<feature type="glycosylation site" description="N-linked (GlcNAc...) asparagine" evidence="2">
    <location>
        <position position="72"/>
    </location>
</feature>
<feature type="glycosylation site" description="N-linked (GlcNAc...) asparagine" evidence="2">
    <location>
        <position position="133"/>
    </location>
</feature>
<feature type="glycosylation site" description="N-linked (GlcNAc...) asparagine" evidence="2">
    <location>
        <position position="143"/>
    </location>
</feature>
<feature type="glycosylation site" description="N-linked (GlcNAc...) asparagine" evidence="2">
    <location>
        <position position="149"/>
    </location>
</feature>
<feature type="sequence conflict" description="In Ref. 2; AAH81805." evidence="3" ref="2">
    <original>P</original>
    <variation>T</variation>
    <location>
        <position position="191"/>
    </location>
</feature>
<protein>
    <recommendedName>
        <fullName>Neurexophilin-4</fullName>
    </recommendedName>
</protein>
<proteinExistence type="evidence at transcript level"/>
<accession>Q9Z2N4</accession>
<accession>Q642D9</accession>